<name>SERB_CAMJD</name>
<sequence>MIKLCVFDFDATLMDGETIDILATAHGKGNQISEITRYAMAGELDFFESLQKRVSFLKGMSYKKVLELGSTLPLMHGAHELIQYLKSKNIQIVIFSGGFHEGIDPAMQKLGINLGFANYLHHKNDILTGLIGGEIMFSNSKGLMLQRLKSFLNLKTDEVMCVGDGANDLAMFNESGLKIAFCAKEILRSQADICIDIKDLKEIIKVI</sequence>
<accession>A7H590</accession>
<comment type="catalytic activity">
    <reaction evidence="2">
        <text>O-phospho-L-serine + H2O = L-serine + phosphate</text>
        <dbReference type="Rhea" id="RHEA:21208"/>
        <dbReference type="ChEBI" id="CHEBI:15377"/>
        <dbReference type="ChEBI" id="CHEBI:33384"/>
        <dbReference type="ChEBI" id="CHEBI:43474"/>
        <dbReference type="ChEBI" id="CHEBI:57524"/>
        <dbReference type="EC" id="3.1.3.3"/>
    </reaction>
</comment>
<comment type="catalytic activity">
    <reaction evidence="2">
        <text>O-phospho-D-serine + H2O = D-serine + phosphate</text>
        <dbReference type="Rhea" id="RHEA:24873"/>
        <dbReference type="ChEBI" id="CHEBI:15377"/>
        <dbReference type="ChEBI" id="CHEBI:35247"/>
        <dbReference type="ChEBI" id="CHEBI:43474"/>
        <dbReference type="ChEBI" id="CHEBI:58680"/>
        <dbReference type="EC" id="3.1.3.3"/>
    </reaction>
</comment>
<comment type="cofactor">
    <cofactor evidence="2">
        <name>Mg(2+)</name>
        <dbReference type="ChEBI" id="CHEBI:18420"/>
    </cofactor>
</comment>
<comment type="pathway">
    <text evidence="3">Amino-acid biosynthesis; L-serine biosynthesis; L-serine from 3-phospho-D-glycerate: step 3/3.</text>
</comment>
<comment type="similarity">
    <text evidence="3">Belongs to the HAD-like hydrolase superfamily. SerB family.</text>
</comment>
<reference evidence="6" key="1">
    <citation type="submission" date="2007-07" db="EMBL/GenBank/DDBJ databases">
        <title>Complete genome sequence of Campylobacter jejuni subsp doylei 269.97 isolated from human blood.</title>
        <authorList>
            <person name="Fouts D.E."/>
            <person name="Mongodin E.F."/>
            <person name="Puiu D."/>
            <person name="Sebastian Y."/>
            <person name="Miller W.G."/>
            <person name="Mandrell R.E."/>
            <person name="Lastovica A.J."/>
            <person name="Nelson K.E."/>
        </authorList>
    </citation>
    <scope>NUCLEOTIDE SEQUENCE [LARGE SCALE GENOMIC DNA]</scope>
    <source>
        <strain evidence="6">ATCC BAA-1458 / RM4099 / 269.97</strain>
    </source>
</reference>
<reference evidence="3" key="2">
    <citation type="journal article" date="2015" name="Proc. Natl. Acad. Sci. U.S.A.">
        <title>Panoramic view of a superfamily of phosphatases through substrate profiling.</title>
        <authorList>
            <person name="Huang H."/>
            <person name="Pandya C."/>
            <person name="Liu C."/>
            <person name="Al-Obaidi N.F."/>
            <person name="Wang M."/>
            <person name="Zheng L."/>
            <person name="Toews Keating S."/>
            <person name="Aono M."/>
            <person name="Love J.D."/>
            <person name="Evans B."/>
            <person name="Seidel R.D."/>
            <person name="Hillerich B.S."/>
            <person name="Garforth S.J."/>
            <person name="Almo S.C."/>
            <person name="Mariano P.S."/>
            <person name="Dunaway-Mariano D."/>
            <person name="Allen K.N."/>
            <person name="Farelli J.D."/>
        </authorList>
    </citation>
    <scope>CATALYTIC ACTIVITY</scope>
    <scope>COFACTOR</scope>
</reference>
<organism evidence="6">
    <name type="scientific">Campylobacter jejuni subsp. doylei (strain ATCC BAA-1458 / RM4099 / 269.97)</name>
    <dbReference type="NCBI Taxonomy" id="360109"/>
    <lineage>
        <taxon>Bacteria</taxon>
        <taxon>Pseudomonadati</taxon>
        <taxon>Campylobacterota</taxon>
        <taxon>Epsilonproteobacteria</taxon>
        <taxon>Campylobacterales</taxon>
        <taxon>Campylobacteraceae</taxon>
        <taxon>Campylobacter</taxon>
    </lineage>
</organism>
<evidence type="ECO:0000250" key="1">
    <source>
        <dbReference type="UniProtKB" id="Q58989"/>
    </source>
</evidence>
<evidence type="ECO:0000269" key="2">
    <source>
    </source>
</evidence>
<evidence type="ECO:0000305" key="3"/>
<evidence type="ECO:0000305" key="4">
    <source>
    </source>
</evidence>
<evidence type="ECO:0000312" key="5">
    <source>
        <dbReference type="EMBL" id="ABS43618.1"/>
    </source>
</evidence>
<evidence type="ECO:0000312" key="6">
    <source>
        <dbReference type="Proteomes" id="UP000002302"/>
    </source>
</evidence>
<gene>
    <name evidence="5" type="primary">serB</name>
    <name evidence="5" type="ordered locus">JJD26997_1689</name>
</gene>
<dbReference type="EC" id="3.1.3.3" evidence="2"/>
<dbReference type="EMBL" id="CP000768">
    <property type="protein sequence ID" value="ABS43618.1"/>
    <property type="molecule type" value="Genomic_DNA"/>
</dbReference>
<dbReference type="SMR" id="A7H590"/>
<dbReference type="KEGG" id="cjd:JJD26997_1689"/>
<dbReference type="HOGENOM" id="CLU_036368_4_3_7"/>
<dbReference type="UniPathway" id="UPA00135">
    <property type="reaction ID" value="UER00198"/>
</dbReference>
<dbReference type="Proteomes" id="UP000002302">
    <property type="component" value="Chromosome"/>
</dbReference>
<dbReference type="GO" id="GO:0005737">
    <property type="term" value="C:cytoplasm"/>
    <property type="evidence" value="ECO:0007669"/>
    <property type="project" value="TreeGrafter"/>
</dbReference>
<dbReference type="GO" id="GO:0036424">
    <property type="term" value="F:L-phosphoserine phosphatase activity"/>
    <property type="evidence" value="ECO:0007669"/>
    <property type="project" value="InterPro"/>
</dbReference>
<dbReference type="GO" id="GO:0000287">
    <property type="term" value="F:magnesium ion binding"/>
    <property type="evidence" value="ECO:0007669"/>
    <property type="project" value="TreeGrafter"/>
</dbReference>
<dbReference type="GO" id="GO:0006564">
    <property type="term" value="P:L-serine biosynthetic process"/>
    <property type="evidence" value="ECO:0007669"/>
    <property type="project" value="UniProtKB-KW"/>
</dbReference>
<dbReference type="CDD" id="cd07500">
    <property type="entry name" value="HAD_PSP"/>
    <property type="match status" value="1"/>
</dbReference>
<dbReference type="Gene3D" id="3.40.50.1000">
    <property type="entry name" value="HAD superfamily/HAD-like"/>
    <property type="match status" value="1"/>
</dbReference>
<dbReference type="InterPro" id="IPR050582">
    <property type="entry name" value="HAD-like_SerB"/>
</dbReference>
<dbReference type="InterPro" id="IPR036412">
    <property type="entry name" value="HAD-like_sf"/>
</dbReference>
<dbReference type="InterPro" id="IPR023214">
    <property type="entry name" value="HAD_sf"/>
</dbReference>
<dbReference type="InterPro" id="IPR004469">
    <property type="entry name" value="PSP"/>
</dbReference>
<dbReference type="NCBIfam" id="TIGR01488">
    <property type="entry name" value="HAD-SF-IB"/>
    <property type="match status" value="1"/>
</dbReference>
<dbReference type="NCBIfam" id="TIGR00338">
    <property type="entry name" value="serB"/>
    <property type="match status" value="1"/>
</dbReference>
<dbReference type="PANTHER" id="PTHR43344">
    <property type="entry name" value="PHOSPHOSERINE PHOSPHATASE"/>
    <property type="match status" value="1"/>
</dbReference>
<dbReference type="PANTHER" id="PTHR43344:SF2">
    <property type="entry name" value="PHOSPHOSERINE PHOSPHATASE"/>
    <property type="match status" value="1"/>
</dbReference>
<dbReference type="Pfam" id="PF00702">
    <property type="entry name" value="Hydrolase"/>
    <property type="match status" value="1"/>
</dbReference>
<dbReference type="SFLD" id="SFLDS00003">
    <property type="entry name" value="Haloacid_Dehalogenase"/>
    <property type="match status" value="1"/>
</dbReference>
<dbReference type="SFLD" id="SFLDF00029">
    <property type="entry name" value="phosphoserine_phosphatase"/>
    <property type="match status" value="1"/>
</dbReference>
<dbReference type="SUPFAM" id="SSF56784">
    <property type="entry name" value="HAD-like"/>
    <property type="match status" value="1"/>
</dbReference>
<protein>
    <recommendedName>
        <fullName evidence="4">Phosphoserine phosphatase</fullName>
        <shortName evidence="1">PSP</shortName>
        <shortName evidence="1">PSPase</shortName>
        <ecNumber evidence="2">3.1.3.3</ecNumber>
    </recommendedName>
    <alternativeName>
        <fullName evidence="1">O-phosphoserine phosphohydrolase</fullName>
    </alternativeName>
</protein>
<proteinExistence type="evidence at protein level"/>
<keyword id="KW-0028">Amino-acid biosynthesis</keyword>
<keyword id="KW-0378">Hydrolase</keyword>
<keyword id="KW-0460">Magnesium</keyword>
<keyword id="KW-0479">Metal-binding</keyword>
<keyword id="KW-0718">Serine biosynthesis</keyword>
<feature type="chain" id="PRO_0000435615" description="Phosphoserine phosphatase" evidence="3">
    <location>
        <begin position="1"/>
        <end position="207"/>
    </location>
</feature>
<feature type="active site" description="Nucleophile" evidence="1">
    <location>
        <position position="8"/>
    </location>
</feature>
<feature type="active site" description="Proton donor" evidence="1">
    <location>
        <position position="10"/>
    </location>
</feature>
<feature type="binding site" evidence="1">
    <location>
        <position position="8"/>
    </location>
    <ligand>
        <name>Mg(2+)</name>
        <dbReference type="ChEBI" id="CHEBI:18420"/>
    </ligand>
</feature>
<feature type="binding site" evidence="1">
    <location>
        <position position="10"/>
    </location>
    <ligand>
        <name>Mg(2+)</name>
        <dbReference type="ChEBI" id="CHEBI:18420"/>
    </ligand>
</feature>
<feature type="binding site" evidence="1">
    <location>
        <position position="17"/>
    </location>
    <ligand>
        <name>substrate</name>
    </ligand>
</feature>
<feature type="binding site" evidence="1">
    <location>
        <position position="53"/>
    </location>
    <ligand>
        <name>substrate</name>
    </ligand>
</feature>
<feature type="binding site" evidence="1">
    <location>
        <begin position="96"/>
        <end position="97"/>
    </location>
    <ligand>
        <name>substrate</name>
    </ligand>
</feature>
<feature type="binding site" evidence="1">
    <location>
        <position position="141"/>
    </location>
    <ligand>
        <name>substrate</name>
    </ligand>
</feature>
<feature type="binding site" evidence="1">
    <location>
        <position position="164"/>
    </location>
    <ligand>
        <name>Mg(2+)</name>
        <dbReference type="ChEBI" id="CHEBI:18420"/>
    </ligand>
</feature>
<feature type="binding site" evidence="1">
    <location>
        <position position="167"/>
    </location>
    <ligand>
        <name>substrate</name>
    </ligand>
</feature>